<feature type="chain" id="PRO_1000068348" description="Peptide methionine sulfoxide reductase MsrA">
    <location>
        <begin position="1"/>
        <end position="147"/>
    </location>
</feature>
<feature type="active site" evidence="1">
    <location>
        <position position="10"/>
    </location>
</feature>
<dbReference type="EC" id="1.8.4.11" evidence="1"/>
<dbReference type="EMBL" id="CP000084">
    <property type="protein sequence ID" value="AAZ21009.1"/>
    <property type="molecule type" value="Genomic_DNA"/>
</dbReference>
<dbReference type="RefSeq" id="WP_011281532.1">
    <property type="nucleotide sequence ID" value="NC_007205.1"/>
</dbReference>
<dbReference type="SMR" id="Q4FP80"/>
<dbReference type="STRING" id="335992.SAR11_0188"/>
<dbReference type="GeneID" id="66294686"/>
<dbReference type="KEGG" id="pub:SAR11_0188"/>
<dbReference type="eggNOG" id="COG0225">
    <property type="taxonomic scope" value="Bacteria"/>
</dbReference>
<dbReference type="HOGENOM" id="CLU_031040_10_2_5"/>
<dbReference type="OrthoDB" id="4174719at2"/>
<dbReference type="Proteomes" id="UP000002528">
    <property type="component" value="Chromosome"/>
</dbReference>
<dbReference type="GO" id="GO:0033744">
    <property type="term" value="F:L-methionine:thioredoxin-disulfide S-oxidoreductase activity"/>
    <property type="evidence" value="ECO:0007669"/>
    <property type="project" value="RHEA"/>
</dbReference>
<dbReference type="GO" id="GO:0008113">
    <property type="term" value="F:peptide-methionine (S)-S-oxide reductase activity"/>
    <property type="evidence" value="ECO:0007669"/>
    <property type="project" value="UniProtKB-UniRule"/>
</dbReference>
<dbReference type="GO" id="GO:0036211">
    <property type="term" value="P:protein modification process"/>
    <property type="evidence" value="ECO:0007669"/>
    <property type="project" value="UniProtKB-UniRule"/>
</dbReference>
<dbReference type="Gene3D" id="3.30.1060.10">
    <property type="entry name" value="Peptide methionine sulphoxide reductase MsrA"/>
    <property type="match status" value="1"/>
</dbReference>
<dbReference type="HAMAP" id="MF_01401">
    <property type="entry name" value="MsrA"/>
    <property type="match status" value="1"/>
</dbReference>
<dbReference type="InterPro" id="IPR002569">
    <property type="entry name" value="Met_Sox_Rdtase_MsrA_dom"/>
</dbReference>
<dbReference type="InterPro" id="IPR036509">
    <property type="entry name" value="Met_Sox_Rdtase_MsrA_sf"/>
</dbReference>
<dbReference type="NCBIfam" id="TIGR00401">
    <property type="entry name" value="msrA"/>
    <property type="match status" value="1"/>
</dbReference>
<dbReference type="PANTHER" id="PTHR43774">
    <property type="entry name" value="PEPTIDE METHIONINE SULFOXIDE REDUCTASE"/>
    <property type="match status" value="1"/>
</dbReference>
<dbReference type="PANTHER" id="PTHR43774:SF1">
    <property type="entry name" value="PEPTIDE METHIONINE SULFOXIDE REDUCTASE MSRA 2"/>
    <property type="match status" value="1"/>
</dbReference>
<dbReference type="Pfam" id="PF01625">
    <property type="entry name" value="PMSR"/>
    <property type="match status" value="1"/>
</dbReference>
<dbReference type="SUPFAM" id="SSF55068">
    <property type="entry name" value="Peptide methionine sulfoxide reductase"/>
    <property type="match status" value="1"/>
</dbReference>
<gene>
    <name evidence="1" type="primary">msrA</name>
    <name type="ordered locus">SAR11_0188</name>
</gene>
<comment type="function">
    <text evidence="1">Has an important function as a repair enzyme for proteins that have been inactivated by oxidation. Catalyzes the reversible oxidation-reduction of methionine sulfoxide in proteins to methionine.</text>
</comment>
<comment type="catalytic activity">
    <reaction evidence="1">
        <text>L-methionyl-[protein] + [thioredoxin]-disulfide + H2O = L-methionyl-(S)-S-oxide-[protein] + [thioredoxin]-dithiol</text>
        <dbReference type="Rhea" id="RHEA:14217"/>
        <dbReference type="Rhea" id="RHEA-COMP:10698"/>
        <dbReference type="Rhea" id="RHEA-COMP:10700"/>
        <dbReference type="Rhea" id="RHEA-COMP:12313"/>
        <dbReference type="Rhea" id="RHEA-COMP:12315"/>
        <dbReference type="ChEBI" id="CHEBI:15377"/>
        <dbReference type="ChEBI" id="CHEBI:16044"/>
        <dbReference type="ChEBI" id="CHEBI:29950"/>
        <dbReference type="ChEBI" id="CHEBI:44120"/>
        <dbReference type="ChEBI" id="CHEBI:50058"/>
        <dbReference type="EC" id="1.8.4.11"/>
    </reaction>
</comment>
<comment type="catalytic activity">
    <reaction evidence="1">
        <text>[thioredoxin]-disulfide + L-methionine + H2O = L-methionine (S)-S-oxide + [thioredoxin]-dithiol</text>
        <dbReference type="Rhea" id="RHEA:19993"/>
        <dbReference type="Rhea" id="RHEA-COMP:10698"/>
        <dbReference type="Rhea" id="RHEA-COMP:10700"/>
        <dbReference type="ChEBI" id="CHEBI:15377"/>
        <dbReference type="ChEBI" id="CHEBI:29950"/>
        <dbReference type="ChEBI" id="CHEBI:50058"/>
        <dbReference type="ChEBI" id="CHEBI:57844"/>
        <dbReference type="ChEBI" id="CHEBI:58772"/>
        <dbReference type="EC" id="1.8.4.11"/>
    </reaction>
</comment>
<comment type="similarity">
    <text evidence="1">Belongs to the MsrA Met sulfoxide reductase family.</text>
</comment>
<evidence type="ECO:0000255" key="1">
    <source>
        <dbReference type="HAMAP-Rule" id="MF_01401"/>
    </source>
</evidence>
<organism>
    <name type="scientific">Pelagibacter ubique (strain HTCC1062)</name>
    <dbReference type="NCBI Taxonomy" id="335992"/>
    <lineage>
        <taxon>Bacteria</taxon>
        <taxon>Pseudomonadati</taxon>
        <taxon>Pseudomonadota</taxon>
        <taxon>Alphaproteobacteria</taxon>
        <taxon>Candidatus Pelagibacterales</taxon>
        <taxon>Candidatus Pelagibacteraceae</taxon>
        <taxon>Candidatus Pelagibacter</taxon>
    </lineage>
</organism>
<keyword id="KW-0560">Oxidoreductase</keyword>
<keyword id="KW-1185">Reference proteome</keyword>
<reference key="1">
    <citation type="journal article" date="2005" name="Science">
        <title>Genome streamlining in a cosmopolitan oceanic bacterium.</title>
        <authorList>
            <person name="Giovannoni S.J."/>
            <person name="Tripp H.J."/>
            <person name="Givan S."/>
            <person name="Podar M."/>
            <person name="Vergin K.L."/>
            <person name="Baptista D."/>
            <person name="Bibbs L."/>
            <person name="Eads J."/>
            <person name="Richardson T.H."/>
            <person name="Noordewier M."/>
            <person name="Rappe M.S."/>
            <person name="Short J.M."/>
            <person name="Carrington J.C."/>
            <person name="Mathur E.J."/>
        </authorList>
    </citation>
    <scope>NUCLEOTIDE SEQUENCE [LARGE SCALE GENOMIC DNA]</scope>
    <source>
        <strain>HTCC1062</strain>
    </source>
</reference>
<accession>Q4FP80</accession>
<name>MSRA_PELUB</name>
<proteinExistence type="inferred from homology"/>
<protein>
    <recommendedName>
        <fullName evidence="1">Peptide methionine sulfoxide reductase MsrA</fullName>
        <shortName evidence="1">Protein-methionine-S-oxide reductase</shortName>
        <ecNumber evidence="1">1.8.4.11</ecNumber>
    </recommendedName>
    <alternativeName>
        <fullName evidence="1">Peptide-methionine (S)-S-oxide reductase</fullName>
        <shortName evidence="1">Peptide Met(O) reductase</shortName>
    </alternativeName>
</protein>
<sequence>MEIAVLGLGCFWGPEIKFSKLEGVIKTEVGYCGGDSKTVTYKEVCTCNTNHAEVVKLDFDPKIISYEKILNFFFEIHDPTTLNSQGPDFGTQYRSEIFYLSDRQKEIAESVIKKVNLKLSGNVVTKSSLLKNYCPAEEYHQRYLEKR</sequence>